<keyword id="KW-0067">ATP-binding</keyword>
<keyword id="KW-0963">Cytoplasm</keyword>
<keyword id="KW-1015">Disulfide bond</keyword>
<keyword id="KW-0547">Nucleotide-binding</keyword>
<keyword id="KW-0676">Redox-active center</keyword>
<keyword id="KW-0694">RNA-binding</keyword>
<keyword id="KW-0784">Thiamine biosynthesis</keyword>
<keyword id="KW-0808">Transferase</keyword>
<keyword id="KW-0820">tRNA-binding</keyword>
<name>THII_HAEIG</name>
<feature type="chain" id="PRO_1000074228" description="tRNA sulfurtransferase">
    <location>
        <begin position="1"/>
        <end position="485"/>
    </location>
</feature>
<feature type="domain" description="THUMP" evidence="1">
    <location>
        <begin position="61"/>
        <end position="165"/>
    </location>
</feature>
<feature type="domain" description="Rhodanese" evidence="1">
    <location>
        <begin position="404"/>
        <end position="483"/>
    </location>
</feature>
<feature type="active site" description="Cysteine persulfide intermediate" evidence="1">
    <location>
        <position position="456"/>
    </location>
</feature>
<feature type="binding site" evidence="1">
    <location>
        <begin position="183"/>
        <end position="184"/>
    </location>
    <ligand>
        <name>ATP</name>
        <dbReference type="ChEBI" id="CHEBI:30616"/>
    </ligand>
</feature>
<feature type="binding site" evidence="1">
    <location>
        <position position="265"/>
    </location>
    <ligand>
        <name>ATP</name>
        <dbReference type="ChEBI" id="CHEBI:30616"/>
    </ligand>
</feature>
<feature type="binding site" evidence="1">
    <location>
        <position position="287"/>
    </location>
    <ligand>
        <name>ATP</name>
        <dbReference type="ChEBI" id="CHEBI:30616"/>
    </ligand>
</feature>
<feature type="binding site" evidence="1">
    <location>
        <position position="296"/>
    </location>
    <ligand>
        <name>ATP</name>
        <dbReference type="ChEBI" id="CHEBI:30616"/>
    </ligand>
</feature>
<feature type="disulfide bond" description="Redox-active" evidence="1">
    <location>
        <begin position="344"/>
        <end position="456"/>
    </location>
</feature>
<sequence length="485" mass="55012">MKFIVKLFPEIMIKSETVRKRFAKILTSNIRNILQKYDEETAVVRHWDYIEVRSKNEENREELIALLQRIPGIHHFLEVEEKPFTDLHHIFELTLADVAQQLQGKTFCVRVKRKGKHKFSSIEAERYIGGGLNQHIESTKVRLKNPDVTVRIDIEDDKMMLVKARHAGIGGYPIGTQEDVLSLISGGFDSGVSSYMLIRRGSRVHYCFFNLGGAAHEIGVKQMAYHIWQRYSASHKVRFIAINFEGVVGEILEKVDNGQMGVVLKRMMVRAASKVAQRFNIEAIVTGEALGQVSSQTLTNLRLIDEAADALVLRPLITHDKEQIIAMAKEIGTDDIAKSMPEFCGVISKNPTIKAVREKILAEEGNFNFEILESAVQNAKYLDIRQIAEETEKEVVEVEAISVLGENEVILDIRSPEETDEKPFESGAHDVIQMPFYKLSSQFGSLDQSKNYVLYCERGVMSKLQALYLKENGFSNVRVFAKNIH</sequence>
<reference key="1">
    <citation type="journal article" date="2007" name="Genome Biol.">
        <title>Characterization and modeling of the Haemophilus influenzae core and supragenomes based on the complete genomic sequences of Rd and 12 clinical nontypeable strains.</title>
        <authorList>
            <person name="Hogg J.S."/>
            <person name="Hu F.Z."/>
            <person name="Janto B."/>
            <person name="Boissy R."/>
            <person name="Hayes J."/>
            <person name="Keefe R."/>
            <person name="Post J.C."/>
            <person name="Ehrlich G.D."/>
        </authorList>
    </citation>
    <scope>NUCLEOTIDE SEQUENCE [LARGE SCALE GENOMIC DNA]</scope>
    <source>
        <strain>PittGG</strain>
    </source>
</reference>
<dbReference type="EC" id="2.8.1.4" evidence="1"/>
<dbReference type="EMBL" id="CP000672">
    <property type="protein sequence ID" value="ABQ99308.1"/>
    <property type="molecule type" value="Genomic_DNA"/>
</dbReference>
<dbReference type="SMR" id="A5UEV3"/>
<dbReference type="KEGG" id="hiq:CGSHiGG_01065"/>
<dbReference type="HOGENOM" id="CLU_037952_4_1_6"/>
<dbReference type="UniPathway" id="UPA00060"/>
<dbReference type="Proteomes" id="UP000001990">
    <property type="component" value="Chromosome"/>
</dbReference>
<dbReference type="GO" id="GO:0005829">
    <property type="term" value="C:cytosol"/>
    <property type="evidence" value="ECO:0007669"/>
    <property type="project" value="TreeGrafter"/>
</dbReference>
<dbReference type="GO" id="GO:0005524">
    <property type="term" value="F:ATP binding"/>
    <property type="evidence" value="ECO:0007669"/>
    <property type="project" value="UniProtKB-UniRule"/>
</dbReference>
<dbReference type="GO" id="GO:0004810">
    <property type="term" value="F:CCA tRNA nucleotidyltransferase activity"/>
    <property type="evidence" value="ECO:0007669"/>
    <property type="project" value="InterPro"/>
</dbReference>
<dbReference type="GO" id="GO:0000049">
    <property type="term" value="F:tRNA binding"/>
    <property type="evidence" value="ECO:0007669"/>
    <property type="project" value="UniProtKB-UniRule"/>
</dbReference>
<dbReference type="GO" id="GO:0140741">
    <property type="term" value="F:tRNA-uracil-4 sulfurtransferase activity"/>
    <property type="evidence" value="ECO:0007669"/>
    <property type="project" value="UniProtKB-EC"/>
</dbReference>
<dbReference type="GO" id="GO:0009228">
    <property type="term" value="P:thiamine biosynthetic process"/>
    <property type="evidence" value="ECO:0007669"/>
    <property type="project" value="UniProtKB-KW"/>
</dbReference>
<dbReference type="GO" id="GO:0009229">
    <property type="term" value="P:thiamine diphosphate biosynthetic process"/>
    <property type="evidence" value="ECO:0007669"/>
    <property type="project" value="UniProtKB-UniRule"/>
</dbReference>
<dbReference type="GO" id="GO:0052837">
    <property type="term" value="P:thiazole biosynthetic process"/>
    <property type="evidence" value="ECO:0007669"/>
    <property type="project" value="InterPro"/>
</dbReference>
<dbReference type="GO" id="GO:0002937">
    <property type="term" value="P:tRNA 4-thiouridine biosynthesis"/>
    <property type="evidence" value="ECO:0007669"/>
    <property type="project" value="TreeGrafter"/>
</dbReference>
<dbReference type="CDD" id="cd01712">
    <property type="entry name" value="PPase_ThiI"/>
    <property type="match status" value="1"/>
</dbReference>
<dbReference type="CDD" id="cd00158">
    <property type="entry name" value="RHOD"/>
    <property type="match status" value="1"/>
</dbReference>
<dbReference type="CDD" id="cd11716">
    <property type="entry name" value="THUMP_ThiI"/>
    <property type="match status" value="1"/>
</dbReference>
<dbReference type="FunFam" id="3.30.2130.30:FF:000002">
    <property type="entry name" value="tRNA sulfurtransferase"/>
    <property type="match status" value="1"/>
</dbReference>
<dbReference type="FunFam" id="3.40.50.620:FF:000029">
    <property type="entry name" value="tRNA sulfurtransferase"/>
    <property type="match status" value="1"/>
</dbReference>
<dbReference type="Gene3D" id="3.30.2130.30">
    <property type="match status" value="1"/>
</dbReference>
<dbReference type="Gene3D" id="3.40.50.620">
    <property type="entry name" value="HUPs"/>
    <property type="match status" value="1"/>
</dbReference>
<dbReference type="Gene3D" id="3.40.250.10">
    <property type="entry name" value="Rhodanese-like domain"/>
    <property type="match status" value="1"/>
</dbReference>
<dbReference type="HAMAP" id="MF_00021">
    <property type="entry name" value="ThiI"/>
    <property type="match status" value="1"/>
</dbReference>
<dbReference type="InterPro" id="IPR001763">
    <property type="entry name" value="Rhodanese-like_dom"/>
</dbReference>
<dbReference type="InterPro" id="IPR036873">
    <property type="entry name" value="Rhodanese-like_dom_sf"/>
</dbReference>
<dbReference type="InterPro" id="IPR014729">
    <property type="entry name" value="Rossmann-like_a/b/a_fold"/>
</dbReference>
<dbReference type="InterPro" id="IPR020536">
    <property type="entry name" value="ThiI_AANH"/>
</dbReference>
<dbReference type="InterPro" id="IPR054173">
    <property type="entry name" value="ThiI_fer"/>
</dbReference>
<dbReference type="InterPro" id="IPR049961">
    <property type="entry name" value="ThiI_N"/>
</dbReference>
<dbReference type="InterPro" id="IPR026340">
    <property type="entry name" value="THII_Thiazole_biosynth_dom"/>
</dbReference>
<dbReference type="InterPro" id="IPR004114">
    <property type="entry name" value="THUMP_dom"/>
</dbReference>
<dbReference type="InterPro" id="IPR049962">
    <property type="entry name" value="THUMP_ThiI"/>
</dbReference>
<dbReference type="InterPro" id="IPR003720">
    <property type="entry name" value="tRNA_STrfase"/>
</dbReference>
<dbReference type="InterPro" id="IPR050102">
    <property type="entry name" value="tRNA_sulfurtransferase_ThiI"/>
</dbReference>
<dbReference type="NCBIfam" id="TIGR04271">
    <property type="entry name" value="ThiI_C_thiazole"/>
    <property type="match status" value="1"/>
</dbReference>
<dbReference type="NCBIfam" id="TIGR00342">
    <property type="entry name" value="tRNA uracil 4-sulfurtransferase ThiI"/>
    <property type="match status" value="1"/>
</dbReference>
<dbReference type="PANTHER" id="PTHR43209">
    <property type="entry name" value="TRNA SULFURTRANSFERASE"/>
    <property type="match status" value="1"/>
</dbReference>
<dbReference type="PANTHER" id="PTHR43209:SF1">
    <property type="entry name" value="TRNA SULFURTRANSFERASE"/>
    <property type="match status" value="1"/>
</dbReference>
<dbReference type="Pfam" id="PF00581">
    <property type="entry name" value="Rhodanese"/>
    <property type="match status" value="1"/>
</dbReference>
<dbReference type="Pfam" id="PF02568">
    <property type="entry name" value="ThiI"/>
    <property type="match status" value="1"/>
</dbReference>
<dbReference type="Pfam" id="PF22025">
    <property type="entry name" value="ThiI_fer"/>
    <property type="match status" value="1"/>
</dbReference>
<dbReference type="Pfam" id="PF02926">
    <property type="entry name" value="THUMP"/>
    <property type="match status" value="1"/>
</dbReference>
<dbReference type="SMART" id="SM00981">
    <property type="entry name" value="THUMP"/>
    <property type="match status" value="1"/>
</dbReference>
<dbReference type="SUPFAM" id="SSF52402">
    <property type="entry name" value="Adenine nucleotide alpha hydrolases-like"/>
    <property type="match status" value="1"/>
</dbReference>
<dbReference type="SUPFAM" id="SSF52821">
    <property type="entry name" value="Rhodanese/Cell cycle control phosphatase"/>
    <property type="match status" value="1"/>
</dbReference>
<dbReference type="SUPFAM" id="SSF143437">
    <property type="entry name" value="THUMP domain-like"/>
    <property type="match status" value="1"/>
</dbReference>
<dbReference type="PROSITE" id="PS50206">
    <property type="entry name" value="RHODANESE_3"/>
    <property type="match status" value="1"/>
</dbReference>
<dbReference type="PROSITE" id="PS51165">
    <property type="entry name" value="THUMP"/>
    <property type="match status" value="1"/>
</dbReference>
<organism>
    <name type="scientific">Haemophilus influenzae (strain PittGG)</name>
    <dbReference type="NCBI Taxonomy" id="374931"/>
    <lineage>
        <taxon>Bacteria</taxon>
        <taxon>Pseudomonadati</taxon>
        <taxon>Pseudomonadota</taxon>
        <taxon>Gammaproteobacteria</taxon>
        <taxon>Pasteurellales</taxon>
        <taxon>Pasteurellaceae</taxon>
        <taxon>Haemophilus</taxon>
    </lineage>
</organism>
<proteinExistence type="inferred from homology"/>
<gene>
    <name evidence="1" type="primary">thiI</name>
    <name type="ordered locus">CGSHiGG_01065</name>
</gene>
<evidence type="ECO:0000255" key="1">
    <source>
        <dbReference type="HAMAP-Rule" id="MF_00021"/>
    </source>
</evidence>
<protein>
    <recommendedName>
        <fullName evidence="1">tRNA sulfurtransferase</fullName>
        <ecNumber evidence="1">2.8.1.4</ecNumber>
    </recommendedName>
    <alternativeName>
        <fullName evidence="1">Sulfur carrier protein ThiS sulfurtransferase</fullName>
    </alternativeName>
    <alternativeName>
        <fullName evidence="1">Thiamine biosynthesis protein ThiI</fullName>
    </alternativeName>
    <alternativeName>
        <fullName evidence="1">tRNA 4-thiouridine synthase</fullName>
    </alternativeName>
</protein>
<accession>A5UEV3</accession>
<comment type="function">
    <text evidence="1">Catalyzes the ATP-dependent transfer of a sulfur to tRNA to produce 4-thiouridine in position 8 of tRNAs, which functions as a near-UV photosensor. Also catalyzes the transfer of sulfur to the sulfur carrier protein ThiS, forming ThiS-thiocarboxylate. This is a step in the synthesis of thiazole, in the thiamine biosynthesis pathway. The sulfur is donated as persulfide by IscS.</text>
</comment>
<comment type="catalytic activity">
    <reaction evidence="1">
        <text>[ThiI sulfur-carrier protein]-S-sulfanyl-L-cysteine + a uridine in tRNA + 2 reduced [2Fe-2S]-[ferredoxin] + ATP + H(+) = [ThiI sulfur-carrier protein]-L-cysteine + a 4-thiouridine in tRNA + 2 oxidized [2Fe-2S]-[ferredoxin] + AMP + diphosphate</text>
        <dbReference type="Rhea" id="RHEA:24176"/>
        <dbReference type="Rhea" id="RHEA-COMP:10000"/>
        <dbReference type="Rhea" id="RHEA-COMP:10001"/>
        <dbReference type="Rhea" id="RHEA-COMP:13337"/>
        <dbReference type="Rhea" id="RHEA-COMP:13338"/>
        <dbReference type="Rhea" id="RHEA-COMP:13339"/>
        <dbReference type="Rhea" id="RHEA-COMP:13340"/>
        <dbReference type="ChEBI" id="CHEBI:15378"/>
        <dbReference type="ChEBI" id="CHEBI:29950"/>
        <dbReference type="ChEBI" id="CHEBI:30616"/>
        <dbReference type="ChEBI" id="CHEBI:33019"/>
        <dbReference type="ChEBI" id="CHEBI:33737"/>
        <dbReference type="ChEBI" id="CHEBI:33738"/>
        <dbReference type="ChEBI" id="CHEBI:61963"/>
        <dbReference type="ChEBI" id="CHEBI:65315"/>
        <dbReference type="ChEBI" id="CHEBI:136798"/>
        <dbReference type="ChEBI" id="CHEBI:456215"/>
        <dbReference type="EC" id="2.8.1.4"/>
    </reaction>
</comment>
<comment type="catalytic activity">
    <reaction evidence="1">
        <text>[ThiS sulfur-carrier protein]-C-terminal Gly-Gly-AMP + S-sulfanyl-L-cysteinyl-[cysteine desulfurase] + AH2 = [ThiS sulfur-carrier protein]-C-terminal-Gly-aminoethanethioate + L-cysteinyl-[cysteine desulfurase] + A + AMP + 2 H(+)</text>
        <dbReference type="Rhea" id="RHEA:43340"/>
        <dbReference type="Rhea" id="RHEA-COMP:12157"/>
        <dbReference type="Rhea" id="RHEA-COMP:12158"/>
        <dbReference type="Rhea" id="RHEA-COMP:12910"/>
        <dbReference type="Rhea" id="RHEA-COMP:19908"/>
        <dbReference type="ChEBI" id="CHEBI:13193"/>
        <dbReference type="ChEBI" id="CHEBI:15378"/>
        <dbReference type="ChEBI" id="CHEBI:17499"/>
        <dbReference type="ChEBI" id="CHEBI:29950"/>
        <dbReference type="ChEBI" id="CHEBI:61963"/>
        <dbReference type="ChEBI" id="CHEBI:90618"/>
        <dbReference type="ChEBI" id="CHEBI:232372"/>
        <dbReference type="ChEBI" id="CHEBI:456215"/>
    </reaction>
</comment>
<comment type="pathway">
    <text evidence="1">Cofactor biosynthesis; thiamine diphosphate biosynthesis.</text>
</comment>
<comment type="subcellular location">
    <subcellularLocation>
        <location evidence="1">Cytoplasm</location>
    </subcellularLocation>
</comment>
<comment type="similarity">
    <text evidence="1">Belongs to the ThiI family.</text>
</comment>